<sequence>MTKRERIVKSVLAHVPKDAINQFVSRGSTPFSVLIMAAIVGTLAGFVGTYFELAVHFVSETRTEWLRSEIGSVLPLWLAAVLISALLAFIGYFLVHRFAPEAAGSGIPEIEGAMDNIRPVRWWRVLPVKFFGGMGALGSGMVLGREGPTVQMGGAVGRMVTDIFRVKDDDTRHSLLASGAAGGLAAAFNAPLAGIMFVVEEMRPQFRYSLISIRAVIISAIMANIVFRAINGQDAVITMPQYQSPALQTLWLFLLLGALFGVFGVIFNKLITVAQDSFVAIHKNDRKRYLITGSILGGVFGLLLLYVPQLTGGGIALIPDVTTGNYSISILVLLFIGRVVTTLLCFGSGAPGGIFAPMLALGTLFGYAFGASADVLLPTLDIEPGVFAIAGMGALFAATVRAPITGILLVIEMTNNYYLILPLIITCLGAVIVAQLLGGQPIYSQLLHRTLKNDKLRQQDLPENQAS</sequence>
<name>CLCA_VIBPA</name>
<protein>
    <recommendedName>
        <fullName evidence="1">H(+)/Cl(-) exchange transporter ClcA</fullName>
    </recommendedName>
</protein>
<proteinExistence type="inferred from homology"/>
<gene>
    <name evidence="1" type="primary">clcA</name>
    <name type="ordered locus">VPA1166</name>
</gene>
<feature type="chain" id="PRO_0000094481" description="H(+)/Cl(-) exchange transporter ClcA">
    <location>
        <begin position="1"/>
        <end position="467"/>
    </location>
</feature>
<feature type="topological domain" description="Cytoplasmic" evidence="1">
    <location>
        <begin position="1"/>
        <end position="30"/>
    </location>
</feature>
<feature type="transmembrane region" description="Helical" evidence="1">
    <location>
        <begin position="31"/>
        <end position="67"/>
    </location>
</feature>
<feature type="topological domain" description="Periplasmic" evidence="1">
    <location>
        <begin position="68"/>
        <end position="74"/>
    </location>
</feature>
<feature type="transmembrane region" description="Helical" evidence="1">
    <location>
        <begin position="75"/>
        <end position="98"/>
    </location>
</feature>
<feature type="intramembrane region" description="Helical" evidence="1">
    <location>
        <begin position="107"/>
        <end position="114"/>
    </location>
</feature>
<feature type="topological domain" description="Cytoplasmic" evidence="1">
    <location>
        <begin position="115"/>
        <end position="121"/>
    </location>
</feature>
<feature type="transmembrane region" description="Helical" evidence="1">
    <location>
        <begin position="122"/>
        <end position="139"/>
    </location>
</feature>
<feature type="transmembrane region" description="Helical" evidence="1">
    <location>
        <begin position="146"/>
        <end position="164"/>
    </location>
</feature>
<feature type="topological domain" description="Cytoplasmic" evidence="1">
    <location>
        <begin position="165"/>
        <end position="174"/>
    </location>
</feature>
<feature type="intramembrane region" description="Helical" evidence="1">
    <location>
        <begin position="175"/>
        <end position="187"/>
    </location>
</feature>
<feature type="intramembrane region" description="Helical" evidence="1">
    <location>
        <begin position="191"/>
        <end position="199"/>
    </location>
</feature>
<feature type="topological domain" description="Cytoplasmic" evidence="1">
    <location>
        <begin position="200"/>
        <end position="212"/>
    </location>
</feature>
<feature type="transmembrane region" description="Helical" evidence="1">
    <location>
        <begin position="213"/>
        <end position="230"/>
    </location>
</feature>
<feature type="topological domain" description="Periplasmic" evidence="1">
    <location>
        <begin position="231"/>
        <end position="250"/>
    </location>
</feature>
<feature type="transmembrane region" description="Helical" evidence="1">
    <location>
        <begin position="251"/>
        <end position="279"/>
    </location>
</feature>
<feature type="topological domain" description="Cytoplasmic" evidence="1">
    <location>
        <begin position="280"/>
        <end position="285"/>
    </location>
</feature>
<feature type="transmembrane region" description="Helical" evidence="1">
    <location>
        <begin position="286"/>
        <end position="307"/>
    </location>
</feature>
<feature type="topological domain" description="Periplasmic" evidence="1">
    <location>
        <begin position="308"/>
        <end position="327"/>
    </location>
</feature>
<feature type="transmembrane region" description="Helical" evidence="1">
    <location>
        <begin position="328"/>
        <end position="347"/>
    </location>
</feature>
<feature type="transmembrane region" description="Helical" evidence="1">
    <location>
        <begin position="353"/>
        <end position="374"/>
    </location>
</feature>
<feature type="topological domain" description="Periplasmic" evidence="1">
    <location>
        <begin position="375"/>
        <end position="384"/>
    </location>
</feature>
<feature type="intramembrane region" description="Helical" evidence="1">
    <location>
        <begin position="385"/>
        <end position="399"/>
    </location>
</feature>
<feature type="intramembrane region" description="Note=Loop between two helices" evidence="1">
    <location>
        <begin position="400"/>
        <end position="402"/>
    </location>
</feature>
<feature type="intramembrane region" description="Helical" evidence="1">
    <location>
        <begin position="403"/>
        <end position="414"/>
    </location>
</feature>
<feature type="intramembrane region" description="Note=Loop between two helices" evidence="1">
    <location>
        <begin position="415"/>
        <end position="419"/>
    </location>
</feature>
<feature type="transmembrane region" description="Helical" evidence="1">
    <location>
        <begin position="420"/>
        <end position="436"/>
    </location>
</feature>
<feature type="topological domain" description="Cytoplasmic" evidence="1">
    <location>
        <begin position="437"/>
        <end position="467"/>
    </location>
</feature>
<feature type="short sequence motif" description="Selectivity filter part_1" evidence="1">
    <location>
        <begin position="104"/>
        <end position="108"/>
    </location>
</feature>
<feature type="short sequence motif" description="Selectivity filter part_2" evidence="1">
    <location>
        <begin position="144"/>
        <end position="148"/>
    </location>
</feature>
<feature type="short sequence motif" description="Selectivity filter part_3" evidence="1">
    <location>
        <begin position="353"/>
        <end position="357"/>
    </location>
</feature>
<feature type="binding site" evidence="1">
    <location>
        <position position="105"/>
    </location>
    <ligand>
        <name>chloride</name>
        <dbReference type="ChEBI" id="CHEBI:17996"/>
    </ligand>
</feature>
<feature type="binding site" evidence="1">
    <location>
        <position position="354"/>
    </location>
    <ligand>
        <name>chloride</name>
        <dbReference type="ChEBI" id="CHEBI:17996"/>
    </ligand>
</feature>
<feature type="binding site" evidence="1">
    <location>
        <position position="355"/>
    </location>
    <ligand>
        <name>chloride</name>
        <dbReference type="ChEBI" id="CHEBI:17996"/>
    </ligand>
</feature>
<feature type="binding site" evidence="1">
    <location>
        <position position="443"/>
    </location>
    <ligand>
        <name>chloride</name>
        <dbReference type="ChEBI" id="CHEBI:17996"/>
    </ligand>
</feature>
<feature type="site" description="Mediates proton transfer from the outer aqueous phase to the interior of the protein; involved in linking H(+) and Cl(-) transport" evidence="1">
    <location>
        <position position="146"/>
    </location>
</feature>
<feature type="site" description="Mediates proton transfer from the protein to the inner aqueous phase" evidence="1">
    <location>
        <position position="201"/>
    </location>
</feature>
<organism>
    <name type="scientific">Vibrio parahaemolyticus serotype O3:K6 (strain RIMD 2210633)</name>
    <dbReference type="NCBI Taxonomy" id="223926"/>
    <lineage>
        <taxon>Bacteria</taxon>
        <taxon>Pseudomonadati</taxon>
        <taxon>Pseudomonadota</taxon>
        <taxon>Gammaproteobacteria</taxon>
        <taxon>Vibrionales</taxon>
        <taxon>Vibrionaceae</taxon>
        <taxon>Vibrio</taxon>
    </lineage>
</organism>
<keyword id="KW-0050">Antiport</keyword>
<keyword id="KW-0997">Cell inner membrane</keyword>
<keyword id="KW-1003">Cell membrane</keyword>
<keyword id="KW-0868">Chloride</keyword>
<keyword id="KW-0406">Ion transport</keyword>
<keyword id="KW-0472">Membrane</keyword>
<keyword id="KW-0812">Transmembrane</keyword>
<keyword id="KW-1133">Transmembrane helix</keyword>
<keyword id="KW-0813">Transport</keyword>
<evidence type="ECO:0000255" key="1">
    <source>
        <dbReference type="HAMAP-Rule" id="MF_01128"/>
    </source>
</evidence>
<accession>Q87GZ9</accession>
<dbReference type="EMBL" id="BA000032">
    <property type="protein sequence ID" value="BAC62509.1"/>
    <property type="molecule type" value="Genomic_DNA"/>
</dbReference>
<dbReference type="RefSeq" id="NP_800676.1">
    <property type="nucleotide sequence ID" value="NC_004605.1"/>
</dbReference>
<dbReference type="RefSeq" id="WP_005463563.1">
    <property type="nucleotide sequence ID" value="NC_004605.1"/>
</dbReference>
<dbReference type="SMR" id="Q87GZ9"/>
<dbReference type="GeneID" id="1191862"/>
<dbReference type="KEGG" id="vpa:VPA1166"/>
<dbReference type="PATRIC" id="fig|223926.6.peg.4091"/>
<dbReference type="eggNOG" id="COG0038">
    <property type="taxonomic scope" value="Bacteria"/>
</dbReference>
<dbReference type="HOGENOM" id="CLU_015263_7_0_6"/>
<dbReference type="Proteomes" id="UP000002493">
    <property type="component" value="Chromosome 2"/>
</dbReference>
<dbReference type="GO" id="GO:0005886">
    <property type="term" value="C:plasma membrane"/>
    <property type="evidence" value="ECO:0007669"/>
    <property type="project" value="UniProtKB-SubCell"/>
</dbReference>
<dbReference type="GO" id="GO:0015297">
    <property type="term" value="F:antiporter activity"/>
    <property type="evidence" value="ECO:0007669"/>
    <property type="project" value="UniProtKB-UniRule"/>
</dbReference>
<dbReference type="GO" id="GO:0005247">
    <property type="term" value="F:voltage-gated chloride channel activity"/>
    <property type="evidence" value="ECO:0007669"/>
    <property type="project" value="TreeGrafter"/>
</dbReference>
<dbReference type="CDD" id="cd01031">
    <property type="entry name" value="EriC"/>
    <property type="match status" value="1"/>
</dbReference>
<dbReference type="Gene3D" id="1.10.3080.10">
    <property type="entry name" value="Clc chloride channel"/>
    <property type="match status" value="1"/>
</dbReference>
<dbReference type="HAMAP" id="MF_01128">
    <property type="entry name" value="CLC_ClcA"/>
    <property type="match status" value="1"/>
</dbReference>
<dbReference type="InterPro" id="IPR023861">
    <property type="entry name" value="Cl-channel_ClcA"/>
</dbReference>
<dbReference type="InterPro" id="IPR014743">
    <property type="entry name" value="Cl-channel_core"/>
</dbReference>
<dbReference type="InterPro" id="IPR001807">
    <property type="entry name" value="ClC"/>
</dbReference>
<dbReference type="NCBIfam" id="NF003640">
    <property type="entry name" value="PRK05277.1"/>
    <property type="match status" value="1"/>
</dbReference>
<dbReference type="PANTHER" id="PTHR45711">
    <property type="entry name" value="CHLORIDE CHANNEL PROTEIN"/>
    <property type="match status" value="1"/>
</dbReference>
<dbReference type="PANTHER" id="PTHR45711:SF6">
    <property type="entry name" value="CHLORIDE CHANNEL PROTEIN"/>
    <property type="match status" value="1"/>
</dbReference>
<dbReference type="Pfam" id="PF00654">
    <property type="entry name" value="Voltage_CLC"/>
    <property type="match status" value="1"/>
</dbReference>
<dbReference type="PRINTS" id="PR00762">
    <property type="entry name" value="CLCHANNEL"/>
</dbReference>
<dbReference type="SUPFAM" id="SSF81340">
    <property type="entry name" value="Clc chloride channel"/>
    <property type="match status" value="1"/>
</dbReference>
<comment type="function">
    <text evidence="1">Proton-coupled chloride transporter. Functions as antiport system and exchanges two chloride ions for 1 proton. Probably acts as an electrical shunt for an outwardly-directed proton pump that is linked to amino acid decarboxylation, as part of the extreme acid resistance (XAR) response.</text>
</comment>
<comment type="catalytic activity">
    <reaction evidence="1">
        <text>2 chloride(in) + H(+)(out) = 2 chloride(out) + H(+)(in)</text>
        <dbReference type="Rhea" id="RHEA:29567"/>
        <dbReference type="ChEBI" id="CHEBI:15378"/>
        <dbReference type="ChEBI" id="CHEBI:17996"/>
    </reaction>
</comment>
<comment type="subunit">
    <text evidence="1">Homodimer.</text>
</comment>
<comment type="subcellular location">
    <subcellularLocation>
        <location evidence="1">Cell inner membrane</location>
        <topology evidence="1">Multi-pass membrane protein</topology>
    </subcellularLocation>
</comment>
<comment type="similarity">
    <text evidence="1">Belongs to the chloride channel (TC 2.A.49) family. ClcA subfamily.</text>
</comment>
<reference key="1">
    <citation type="journal article" date="2003" name="Lancet">
        <title>Genome sequence of Vibrio parahaemolyticus: a pathogenic mechanism distinct from that of V. cholerae.</title>
        <authorList>
            <person name="Makino K."/>
            <person name="Oshima K."/>
            <person name="Kurokawa K."/>
            <person name="Yokoyama K."/>
            <person name="Uda T."/>
            <person name="Tagomori K."/>
            <person name="Iijima Y."/>
            <person name="Najima M."/>
            <person name="Nakano M."/>
            <person name="Yamashita A."/>
            <person name="Kubota Y."/>
            <person name="Kimura S."/>
            <person name="Yasunaga T."/>
            <person name="Honda T."/>
            <person name="Shinagawa H."/>
            <person name="Hattori M."/>
            <person name="Iida T."/>
        </authorList>
    </citation>
    <scope>NUCLEOTIDE SEQUENCE [LARGE SCALE GENOMIC DNA]</scope>
    <source>
        <strain>RIMD 2210633</strain>
    </source>
</reference>